<gene>
    <name evidence="2" type="primary">infB</name>
    <name type="ordered locus">HCH_01239</name>
</gene>
<evidence type="ECO:0000250" key="1"/>
<evidence type="ECO:0000255" key="2">
    <source>
        <dbReference type="HAMAP-Rule" id="MF_00100"/>
    </source>
</evidence>
<evidence type="ECO:0000256" key="3">
    <source>
        <dbReference type="SAM" id="MobiDB-lite"/>
    </source>
</evidence>
<dbReference type="EMBL" id="CP000155">
    <property type="protein sequence ID" value="ABC28111.1"/>
    <property type="molecule type" value="Genomic_DNA"/>
</dbReference>
<dbReference type="RefSeq" id="WP_011395184.1">
    <property type="nucleotide sequence ID" value="NC_007645.1"/>
</dbReference>
<dbReference type="SMR" id="Q2SML3"/>
<dbReference type="STRING" id="349521.HCH_01239"/>
<dbReference type="KEGG" id="hch:HCH_01239"/>
<dbReference type="eggNOG" id="COG0532">
    <property type="taxonomic scope" value="Bacteria"/>
</dbReference>
<dbReference type="eggNOG" id="COG3064">
    <property type="taxonomic scope" value="Bacteria"/>
</dbReference>
<dbReference type="HOGENOM" id="CLU_006301_6_1_6"/>
<dbReference type="OrthoDB" id="9811804at2"/>
<dbReference type="Proteomes" id="UP000000238">
    <property type="component" value="Chromosome"/>
</dbReference>
<dbReference type="GO" id="GO:0005829">
    <property type="term" value="C:cytosol"/>
    <property type="evidence" value="ECO:0007669"/>
    <property type="project" value="TreeGrafter"/>
</dbReference>
<dbReference type="GO" id="GO:0005525">
    <property type="term" value="F:GTP binding"/>
    <property type="evidence" value="ECO:0007669"/>
    <property type="project" value="UniProtKB-KW"/>
</dbReference>
<dbReference type="GO" id="GO:0003924">
    <property type="term" value="F:GTPase activity"/>
    <property type="evidence" value="ECO:0007669"/>
    <property type="project" value="UniProtKB-UniRule"/>
</dbReference>
<dbReference type="GO" id="GO:0003743">
    <property type="term" value="F:translation initiation factor activity"/>
    <property type="evidence" value="ECO:0007669"/>
    <property type="project" value="UniProtKB-UniRule"/>
</dbReference>
<dbReference type="CDD" id="cd01887">
    <property type="entry name" value="IF2_eIF5B"/>
    <property type="match status" value="1"/>
</dbReference>
<dbReference type="CDD" id="cd03702">
    <property type="entry name" value="IF2_mtIF2_II"/>
    <property type="match status" value="1"/>
</dbReference>
<dbReference type="CDD" id="cd03692">
    <property type="entry name" value="mtIF2_IVc"/>
    <property type="match status" value="1"/>
</dbReference>
<dbReference type="FunFam" id="2.40.30.10:FF:000007">
    <property type="entry name" value="Translation initiation factor IF-2"/>
    <property type="match status" value="1"/>
</dbReference>
<dbReference type="FunFam" id="2.40.30.10:FF:000008">
    <property type="entry name" value="Translation initiation factor IF-2"/>
    <property type="match status" value="1"/>
</dbReference>
<dbReference type="FunFam" id="3.40.50.10050:FF:000001">
    <property type="entry name" value="Translation initiation factor IF-2"/>
    <property type="match status" value="1"/>
</dbReference>
<dbReference type="FunFam" id="3.40.50.300:FF:000019">
    <property type="entry name" value="Translation initiation factor IF-2"/>
    <property type="match status" value="1"/>
</dbReference>
<dbReference type="Gene3D" id="3.40.50.300">
    <property type="entry name" value="P-loop containing nucleotide triphosphate hydrolases"/>
    <property type="match status" value="1"/>
</dbReference>
<dbReference type="Gene3D" id="3.30.56.50">
    <property type="entry name" value="Putative DNA-binding domain, N-terminal subdomain of bacterial translation initiation factor IF2"/>
    <property type="match status" value="1"/>
</dbReference>
<dbReference type="Gene3D" id="2.40.30.10">
    <property type="entry name" value="Translation factors"/>
    <property type="match status" value="2"/>
</dbReference>
<dbReference type="Gene3D" id="3.40.50.10050">
    <property type="entry name" value="Translation initiation factor IF- 2, domain 3"/>
    <property type="match status" value="1"/>
</dbReference>
<dbReference type="HAMAP" id="MF_00100_B">
    <property type="entry name" value="IF_2_B"/>
    <property type="match status" value="1"/>
</dbReference>
<dbReference type="InterPro" id="IPR009061">
    <property type="entry name" value="DNA-bd_dom_put_sf"/>
</dbReference>
<dbReference type="InterPro" id="IPR053905">
    <property type="entry name" value="EF-G-like_DII"/>
</dbReference>
<dbReference type="InterPro" id="IPR013575">
    <property type="entry name" value="IF2_assoc_dom_bac"/>
</dbReference>
<dbReference type="InterPro" id="IPR044145">
    <property type="entry name" value="IF2_II"/>
</dbReference>
<dbReference type="InterPro" id="IPR006847">
    <property type="entry name" value="IF2_N"/>
</dbReference>
<dbReference type="InterPro" id="IPR027417">
    <property type="entry name" value="P-loop_NTPase"/>
</dbReference>
<dbReference type="InterPro" id="IPR005225">
    <property type="entry name" value="Small_GTP-bd"/>
</dbReference>
<dbReference type="InterPro" id="IPR000795">
    <property type="entry name" value="T_Tr_GTP-bd_dom"/>
</dbReference>
<dbReference type="InterPro" id="IPR000178">
    <property type="entry name" value="TF_IF2_bacterial-like"/>
</dbReference>
<dbReference type="InterPro" id="IPR015760">
    <property type="entry name" value="TIF_IF2"/>
</dbReference>
<dbReference type="InterPro" id="IPR023115">
    <property type="entry name" value="TIF_IF2_dom3"/>
</dbReference>
<dbReference type="InterPro" id="IPR036925">
    <property type="entry name" value="TIF_IF2_dom3_sf"/>
</dbReference>
<dbReference type="InterPro" id="IPR009000">
    <property type="entry name" value="Transl_B-barrel_sf"/>
</dbReference>
<dbReference type="NCBIfam" id="TIGR00487">
    <property type="entry name" value="IF-2"/>
    <property type="match status" value="1"/>
</dbReference>
<dbReference type="NCBIfam" id="TIGR00231">
    <property type="entry name" value="small_GTP"/>
    <property type="match status" value="1"/>
</dbReference>
<dbReference type="PANTHER" id="PTHR43381:SF5">
    <property type="entry name" value="TR-TYPE G DOMAIN-CONTAINING PROTEIN"/>
    <property type="match status" value="1"/>
</dbReference>
<dbReference type="PANTHER" id="PTHR43381">
    <property type="entry name" value="TRANSLATION INITIATION FACTOR IF-2-RELATED"/>
    <property type="match status" value="1"/>
</dbReference>
<dbReference type="Pfam" id="PF22042">
    <property type="entry name" value="EF-G_D2"/>
    <property type="match status" value="1"/>
</dbReference>
<dbReference type="Pfam" id="PF00009">
    <property type="entry name" value="GTP_EFTU"/>
    <property type="match status" value="1"/>
</dbReference>
<dbReference type="Pfam" id="PF11987">
    <property type="entry name" value="IF-2"/>
    <property type="match status" value="1"/>
</dbReference>
<dbReference type="Pfam" id="PF08364">
    <property type="entry name" value="IF2_assoc"/>
    <property type="match status" value="1"/>
</dbReference>
<dbReference type="Pfam" id="PF04760">
    <property type="entry name" value="IF2_N"/>
    <property type="match status" value="2"/>
</dbReference>
<dbReference type="SUPFAM" id="SSF52156">
    <property type="entry name" value="Initiation factor IF2/eIF5b, domain 3"/>
    <property type="match status" value="1"/>
</dbReference>
<dbReference type="SUPFAM" id="SSF52540">
    <property type="entry name" value="P-loop containing nucleoside triphosphate hydrolases"/>
    <property type="match status" value="1"/>
</dbReference>
<dbReference type="SUPFAM" id="SSF46955">
    <property type="entry name" value="Putative DNA-binding domain"/>
    <property type="match status" value="1"/>
</dbReference>
<dbReference type="SUPFAM" id="SSF50447">
    <property type="entry name" value="Translation proteins"/>
    <property type="match status" value="2"/>
</dbReference>
<dbReference type="PROSITE" id="PS51722">
    <property type="entry name" value="G_TR_2"/>
    <property type="match status" value="1"/>
</dbReference>
<dbReference type="PROSITE" id="PS01176">
    <property type="entry name" value="IF2"/>
    <property type="match status" value="1"/>
</dbReference>
<organism>
    <name type="scientific">Hahella chejuensis (strain KCTC 2396)</name>
    <dbReference type="NCBI Taxonomy" id="349521"/>
    <lineage>
        <taxon>Bacteria</taxon>
        <taxon>Pseudomonadati</taxon>
        <taxon>Pseudomonadota</taxon>
        <taxon>Gammaproteobacteria</taxon>
        <taxon>Oceanospirillales</taxon>
        <taxon>Hahellaceae</taxon>
        <taxon>Hahella</taxon>
    </lineage>
</organism>
<keyword id="KW-0963">Cytoplasm</keyword>
<keyword id="KW-0342">GTP-binding</keyword>
<keyword id="KW-0396">Initiation factor</keyword>
<keyword id="KW-0547">Nucleotide-binding</keyword>
<keyword id="KW-0648">Protein biosynthesis</keyword>
<keyword id="KW-1185">Reference proteome</keyword>
<sequence>MAEVTIKQLAEDVGAPVERLLKQMVDAGLEKRGEGDIVTDSEKQKLLAFLKQSHGESFSEPKKITLKRKTTTTLKASGTGANRSINVEVRKKRTYIKRSEAVNDIDAQKQQDIQRAAEEAAAKERETEVEVALQNEPGMEATAEVVESVQQEAANMDTQEAEAAPQASVDESVSATTAGGSQEKAGVAADQEAEDAQKSEARKTSKHRRNKEDSEVRREPADAEDLKRREKHKPKPAPQLKSSKVIAIEEDDSSEEAPRRARQRKKKSKVVQDRSVQPIVREVVISDTITVAELAQKMSVKGVEVIKRLMGMGIMATLNQSIDQDVAQLVAEEMGHKVKLLQEDAVETEVLESISFEGESKSRAPVVSVMGHVDHGKTSLLDYIRRAKVAAQESGGITQHIGAYHVETPRGMISFLDTPGHAAFTAMRARGAQCTDIVILVVAADDGVMPQTQEAVQHAKAAGVPLVVAVNKMDKEQADPDRVKNELSALDVIPEEWGGDVQFVPVSAHTGDGIDDLLEAVLLQSEMLELTAVPDAPGKGVVIESSLDRGRGSVATVLVQNGTLRHGDIVLAGEYYGRVRAMVNENGQNVQEAGPSIPVEILGLNGTPDAGDEFIVVPDEKKAREVAEFRQNKERQTRLQRQQAASLENLFENMGKGGVKELNIVLKTDVRGSLEALIGALAEIGNEEVQVKIIASGVGGITETDANLALSTQAIIVGFNVRADASARKIVEKEGIELRYYSVIYNIIDDVKKALTGMLAPEFREDIVGTAEVRDTFKSPKFGQVAGCMVLEGAVYRNKPIRVLRDNVVIFEGELESLRRFKDDVAEVRAGTECGIGVRNYEVKVGDIIEVFDKIRVERSL</sequence>
<proteinExistence type="inferred from homology"/>
<protein>
    <recommendedName>
        <fullName evidence="2">Translation initiation factor IF-2</fullName>
    </recommendedName>
</protein>
<accession>Q2SML3</accession>
<feature type="chain" id="PRO_0000335478" description="Translation initiation factor IF-2">
    <location>
        <begin position="1"/>
        <end position="861"/>
    </location>
</feature>
<feature type="domain" description="tr-type G">
    <location>
        <begin position="362"/>
        <end position="531"/>
    </location>
</feature>
<feature type="region of interest" description="Disordered" evidence="3">
    <location>
        <begin position="107"/>
        <end position="272"/>
    </location>
</feature>
<feature type="region of interest" description="G1" evidence="1">
    <location>
        <begin position="371"/>
        <end position="378"/>
    </location>
</feature>
<feature type="region of interest" description="G2" evidence="1">
    <location>
        <begin position="396"/>
        <end position="400"/>
    </location>
</feature>
<feature type="region of interest" description="G3" evidence="1">
    <location>
        <begin position="417"/>
        <end position="420"/>
    </location>
</feature>
<feature type="region of interest" description="G4" evidence="1">
    <location>
        <begin position="471"/>
        <end position="474"/>
    </location>
</feature>
<feature type="region of interest" description="G5" evidence="1">
    <location>
        <begin position="507"/>
        <end position="509"/>
    </location>
</feature>
<feature type="compositionally biased region" description="Basic and acidic residues" evidence="3">
    <location>
        <begin position="115"/>
        <end position="128"/>
    </location>
</feature>
<feature type="compositionally biased region" description="Polar residues" evidence="3">
    <location>
        <begin position="148"/>
        <end position="158"/>
    </location>
</feature>
<feature type="compositionally biased region" description="Polar residues" evidence="3">
    <location>
        <begin position="169"/>
        <end position="180"/>
    </location>
</feature>
<feature type="compositionally biased region" description="Basic and acidic residues" evidence="3">
    <location>
        <begin position="210"/>
        <end position="228"/>
    </location>
</feature>
<feature type="compositionally biased region" description="Basic residues" evidence="3">
    <location>
        <begin position="260"/>
        <end position="269"/>
    </location>
</feature>
<feature type="binding site" evidence="2">
    <location>
        <begin position="371"/>
        <end position="378"/>
    </location>
    <ligand>
        <name>GTP</name>
        <dbReference type="ChEBI" id="CHEBI:37565"/>
    </ligand>
</feature>
<feature type="binding site" evidence="2">
    <location>
        <begin position="417"/>
        <end position="421"/>
    </location>
    <ligand>
        <name>GTP</name>
        <dbReference type="ChEBI" id="CHEBI:37565"/>
    </ligand>
</feature>
<feature type="binding site" evidence="2">
    <location>
        <begin position="471"/>
        <end position="474"/>
    </location>
    <ligand>
        <name>GTP</name>
        <dbReference type="ChEBI" id="CHEBI:37565"/>
    </ligand>
</feature>
<name>IF2_HAHCH</name>
<comment type="function">
    <text evidence="2">One of the essential components for the initiation of protein synthesis. Protects formylmethionyl-tRNA from spontaneous hydrolysis and promotes its binding to the 30S ribosomal subunits. Also involved in the hydrolysis of GTP during the formation of the 70S ribosomal complex.</text>
</comment>
<comment type="subcellular location">
    <subcellularLocation>
        <location evidence="2">Cytoplasm</location>
    </subcellularLocation>
</comment>
<comment type="similarity">
    <text evidence="2">Belongs to the TRAFAC class translation factor GTPase superfamily. Classic translation factor GTPase family. IF-2 subfamily.</text>
</comment>
<reference key="1">
    <citation type="journal article" date="2005" name="Nucleic Acids Res.">
        <title>Genomic blueprint of Hahella chejuensis, a marine microbe producing an algicidal agent.</title>
        <authorList>
            <person name="Jeong H."/>
            <person name="Yim J.H."/>
            <person name="Lee C."/>
            <person name="Choi S.-H."/>
            <person name="Park Y.K."/>
            <person name="Yoon S.H."/>
            <person name="Hur C.-G."/>
            <person name="Kang H.-Y."/>
            <person name="Kim D."/>
            <person name="Lee H.H."/>
            <person name="Park K.H."/>
            <person name="Park S.-H."/>
            <person name="Park H.-S."/>
            <person name="Lee H.K."/>
            <person name="Oh T.K."/>
            <person name="Kim J.F."/>
        </authorList>
    </citation>
    <scope>NUCLEOTIDE SEQUENCE [LARGE SCALE GENOMIC DNA]</scope>
    <source>
        <strain>KCTC 2396</strain>
    </source>
</reference>